<dbReference type="EC" id="2.8.1.7"/>
<dbReference type="EMBL" id="BA000017">
    <property type="protein sequence ID" value="BAB57006.1"/>
    <property type="molecule type" value="Genomic_DNA"/>
</dbReference>
<dbReference type="SMR" id="P63518"/>
<dbReference type="KEGG" id="sav:SAV0844"/>
<dbReference type="HOGENOM" id="CLU_003433_2_5_9"/>
<dbReference type="PhylomeDB" id="P63518"/>
<dbReference type="Proteomes" id="UP000002481">
    <property type="component" value="Chromosome"/>
</dbReference>
<dbReference type="GO" id="GO:0031071">
    <property type="term" value="F:cysteine desulfurase activity"/>
    <property type="evidence" value="ECO:0007669"/>
    <property type="project" value="UniProtKB-EC"/>
</dbReference>
<dbReference type="GO" id="GO:0030170">
    <property type="term" value="F:pyridoxal phosphate binding"/>
    <property type="evidence" value="ECO:0007669"/>
    <property type="project" value="InterPro"/>
</dbReference>
<dbReference type="GO" id="GO:0006534">
    <property type="term" value="P:cysteine metabolic process"/>
    <property type="evidence" value="ECO:0007669"/>
    <property type="project" value="InterPro"/>
</dbReference>
<dbReference type="CDD" id="cd06453">
    <property type="entry name" value="SufS_like"/>
    <property type="match status" value="1"/>
</dbReference>
<dbReference type="Gene3D" id="3.90.1150.10">
    <property type="entry name" value="Aspartate Aminotransferase, domain 1"/>
    <property type="match status" value="1"/>
</dbReference>
<dbReference type="Gene3D" id="3.40.640.10">
    <property type="entry name" value="Type I PLP-dependent aspartate aminotransferase-like (Major domain)"/>
    <property type="match status" value="1"/>
</dbReference>
<dbReference type="InterPro" id="IPR000192">
    <property type="entry name" value="Aminotrans_V_dom"/>
</dbReference>
<dbReference type="InterPro" id="IPR010970">
    <property type="entry name" value="Cys_dSase_SufS"/>
</dbReference>
<dbReference type="InterPro" id="IPR016454">
    <property type="entry name" value="Cysteine_dSase"/>
</dbReference>
<dbReference type="InterPro" id="IPR015424">
    <property type="entry name" value="PyrdxlP-dep_Trfase"/>
</dbReference>
<dbReference type="InterPro" id="IPR015421">
    <property type="entry name" value="PyrdxlP-dep_Trfase_major"/>
</dbReference>
<dbReference type="InterPro" id="IPR015422">
    <property type="entry name" value="PyrdxlP-dep_Trfase_small"/>
</dbReference>
<dbReference type="NCBIfam" id="TIGR01979">
    <property type="entry name" value="sufS"/>
    <property type="match status" value="1"/>
</dbReference>
<dbReference type="PANTHER" id="PTHR43586">
    <property type="entry name" value="CYSTEINE DESULFURASE"/>
    <property type="match status" value="1"/>
</dbReference>
<dbReference type="PANTHER" id="PTHR43586:SF8">
    <property type="entry name" value="CYSTEINE DESULFURASE 1, CHLOROPLASTIC"/>
    <property type="match status" value="1"/>
</dbReference>
<dbReference type="Pfam" id="PF00266">
    <property type="entry name" value="Aminotran_5"/>
    <property type="match status" value="1"/>
</dbReference>
<dbReference type="PIRSF" id="PIRSF005572">
    <property type="entry name" value="NifS"/>
    <property type="match status" value="1"/>
</dbReference>
<dbReference type="SUPFAM" id="SSF53383">
    <property type="entry name" value="PLP-dependent transferases"/>
    <property type="match status" value="1"/>
</dbReference>
<keyword id="KW-0663">Pyridoxal phosphate</keyword>
<keyword id="KW-0808">Transferase</keyword>
<comment type="function">
    <text evidence="1">Catalyzes the removal of elemental sulfur and selenium atoms from L-cysteine, L-cystine, L-selenocysteine, and L-selenocystine to produce L-alanine.</text>
</comment>
<comment type="catalytic activity">
    <reaction>
        <text>(sulfur carrier)-H + L-cysteine = (sulfur carrier)-SH + L-alanine</text>
        <dbReference type="Rhea" id="RHEA:43892"/>
        <dbReference type="Rhea" id="RHEA-COMP:14737"/>
        <dbReference type="Rhea" id="RHEA-COMP:14739"/>
        <dbReference type="ChEBI" id="CHEBI:29917"/>
        <dbReference type="ChEBI" id="CHEBI:35235"/>
        <dbReference type="ChEBI" id="CHEBI:57972"/>
        <dbReference type="ChEBI" id="CHEBI:64428"/>
        <dbReference type="EC" id="2.8.1.7"/>
    </reaction>
</comment>
<comment type="cofactor">
    <cofactor evidence="1">
        <name>pyridoxal 5'-phosphate</name>
        <dbReference type="ChEBI" id="CHEBI:597326"/>
    </cofactor>
</comment>
<comment type="similarity">
    <text evidence="2">Belongs to the class-V pyridoxal-phosphate-dependent aminotransferase family. Csd subfamily.</text>
</comment>
<protein>
    <recommendedName>
        <fullName>Probable cysteine desulfurase</fullName>
        <ecNumber>2.8.1.7</ecNumber>
    </recommendedName>
</protein>
<evidence type="ECO:0000250" key="1"/>
<evidence type="ECO:0000305" key="2"/>
<reference key="1">
    <citation type="journal article" date="2001" name="Lancet">
        <title>Whole genome sequencing of meticillin-resistant Staphylococcus aureus.</title>
        <authorList>
            <person name="Kuroda M."/>
            <person name="Ohta T."/>
            <person name="Uchiyama I."/>
            <person name="Baba T."/>
            <person name="Yuzawa H."/>
            <person name="Kobayashi I."/>
            <person name="Cui L."/>
            <person name="Oguchi A."/>
            <person name="Aoki K."/>
            <person name="Nagai Y."/>
            <person name="Lian J.-Q."/>
            <person name="Ito T."/>
            <person name="Kanamori M."/>
            <person name="Matsumaru H."/>
            <person name="Maruyama A."/>
            <person name="Murakami H."/>
            <person name="Hosoyama A."/>
            <person name="Mizutani-Ui Y."/>
            <person name="Takahashi N.K."/>
            <person name="Sawano T."/>
            <person name="Inoue R."/>
            <person name="Kaito C."/>
            <person name="Sekimizu K."/>
            <person name="Hirakawa H."/>
            <person name="Kuhara S."/>
            <person name="Goto S."/>
            <person name="Yabuzaki J."/>
            <person name="Kanehisa M."/>
            <person name="Yamashita A."/>
            <person name="Oshima K."/>
            <person name="Furuya K."/>
            <person name="Yoshino C."/>
            <person name="Shiba T."/>
            <person name="Hattori M."/>
            <person name="Ogasawara N."/>
            <person name="Hayashi H."/>
            <person name="Hiramatsu K."/>
        </authorList>
    </citation>
    <scope>NUCLEOTIDE SEQUENCE [LARGE SCALE GENOMIC DNA]</scope>
    <source>
        <strain>Mu50 / ATCC 700699</strain>
    </source>
</reference>
<accession>P63518</accession>
<accession>Q99VG1</accession>
<organism>
    <name type="scientific">Staphylococcus aureus (strain Mu50 / ATCC 700699)</name>
    <dbReference type="NCBI Taxonomy" id="158878"/>
    <lineage>
        <taxon>Bacteria</taxon>
        <taxon>Bacillati</taxon>
        <taxon>Bacillota</taxon>
        <taxon>Bacilli</taxon>
        <taxon>Bacillales</taxon>
        <taxon>Staphylococcaceae</taxon>
        <taxon>Staphylococcus</taxon>
    </lineage>
</organism>
<gene>
    <name type="primary">csd</name>
    <name type="ordered locus">SAV0844</name>
</gene>
<sequence>MAEHSFDVNEVIKDFPILDQKVNGKRLAYLDSTATSQTPMQVLNVLEDYYKRYNSNVHRGVHTLGSLATDGYENARETVRRFINAKYFEEIIFTRGTTASINLVAHSYGDANVEEGDEIVVTEMEHHANIVPWQQLAKRKNATLKFIPMTADGELNIEDIKQTINDKTKIVAIAHISNVLGTINDVKTIAEIAHQHGAIISVDGAQAAPHMKLDMQEMNADFYSFSGHKMLGPTGIGVLFGKRELLQKMEPIEFGGDMIDFVSKYDATWADLPTKFEAGTPLIAQAIGLAEAIRYLERIGFDAIHKYEQELTIYAYEQMSAIEGIEIYGPPKDRRAGVITFNLQDVHPHDVATAVDTEGVAVRAGHHCAQPLMKWLNVSSTARASFYIYNTKEDIDQLINALKQTKEFFSYEF</sequence>
<feature type="chain" id="PRO_0000150310" description="Probable cysteine desulfurase">
    <location>
        <begin position="1"/>
        <end position="413"/>
    </location>
</feature>
<feature type="active site" description="Cysteine persulfide intermediate" evidence="1">
    <location>
        <position position="368"/>
    </location>
</feature>
<feature type="modified residue" description="N6-(pyridoxal phosphate)lysine" evidence="1">
    <location>
        <position position="229"/>
    </location>
</feature>
<proteinExistence type="inferred from homology"/>
<name>CSD_STAAM</name>